<name>MLFA_ASPSB</name>
<proteinExistence type="evidence at protein level"/>
<keyword id="KW-0436">Ligase</keyword>
<keyword id="KW-0596">Phosphopantetheine</keyword>
<keyword id="KW-0597">Phosphoprotein</keyword>
<keyword id="KW-1185">Reference proteome</keyword>
<keyword id="KW-0677">Repeat</keyword>
<gene>
    <name evidence="9" type="primary">mlfA</name>
    <name type="ORF">BO78DRAFT_455717</name>
</gene>
<feature type="chain" id="PRO_0000446438" description="Malformin synthetase mlfA">
    <location>
        <begin position="1"/>
        <end position="5099"/>
    </location>
</feature>
<feature type="domain" description="Carrier 1" evidence="2">
    <location>
        <begin position="756"/>
        <end position="829"/>
    </location>
</feature>
<feature type="domain" description="Carrier 2" evidence="2">
    <location>
        <begin position="1857"/>
        <end position="1934"/>
    </location>
</feature>
<feature type="domain" description="Carrier 3" evidence="2">
    <location>
        <begin position="3032"/>
        <end position="3108"/>
    </location>
</feature>
<feature type="domain" description="Carrier 4" evidence="2">
    <location>
        <begin position="4581"/>
        <end position="4657"/>
    </location>
</feature>
<feature type="region of interest" description="Adenylation 1" evidence="1">
    <location>
        <begin position="224"/>
        <end position="615"/>
    </location>
</feature>
<feature type="region of interest" description="Condensation 1" evidence="1">
    <location>
        <begin position="867"/>
        <end position="1297"/>
    </location>
</feature>
<feature type="region of interest" description="Adenylation 2" evidence="1">
    <location>
        <begin position="1325"/>
        <end position="1717"/>
    </location>
</feature>
<feature type="region of interest" description="Disordered" evidence="3">
    <location>
        <begin position="1995"/>
        <end position="2040"/>
    </location>
</feature>
<feature type="region of interest" description="Condensation 2" evidence="1">
    <location>
        <begin position="2067"/>
        <end position="2482"/>
    </location>
</feature>
<feature type="region of interest" description="Adenylation 3" evidence="1">
    <location>
        <begin position="2505"/>
        <end position="2897"/>
    </location>
</feature>
<feature type="region of interest" description="Condensation 3" evidence="1">
    <location>
        <begin position="3125"/>
        <end position="3589"/>
    </location>
</feature>
<feature type="region of interest" description="Condensation 4" evidence="1">
    <location>
        <begin position="3610"/>
        <end position="4033"/>
    </location>
</feature>
<feature type="region of interest" description="Adenylation 4" evidence="1">
    <location>
        <begin position="4058"/>
        <end position="4446"/>
    </location>
</feature>
<feature type="region of interest" description="Condensation 5" evidence="1">
    <location>
        <begin position="4696"/>
        <end position="5017"/>
    </location>
</feature>
<feature type="compositionally biased region" description="Low complexity" evidence="3">
    <location>
        <begin position="1999"/>
        <end position="2017"/>
    </location>
</feature>
<feature type="modified residue" description="O-(pantetheine 4'-phosphoryl)serine" evidence="2">
    <location>
        <position position="790"/>
    </location>
</feature>
<feature type="modified residue" description="O-(pantetheine 4'-phosphoryl)serine" evidence="2">
    <location>
        <position position="1894"/>
    </location>
</feature>
<feature type="modified residue" description="O-(pantetheine 4'-phosphoryl)serine" evidence="2">
    <location>
        <position position="3069"/>
    </location>
</feature>
<feature type="modified residue" description="O-(pantetheine 4'-phosphoryl)serine" evidence="2">
    <location>
        <position position="4618"/>
    </location>
</feature>
<reference key="1">
    <citation type="journal article" date="2018" name="Nat. Genet.">
        <title>Investigation of inter- and intraspecies variation through genome sequencing of Aspergillus section Nigri.</title>
        <authorList>
            <person name="Vesth T.C."/>
            <person name="Nybo J.L."/>
            <person name="Theobald S."/>
            <person name="Frisvad J.C."/>
            <person name="Larsen T.O."/>
            <person name="Nielsen K.F."/>
            <person name="Hoof J.B."/>
            <person name="Brandl J."/>
            <person name="Salamov A."/>
            <person name="Riley R."/>
            <person name="Gladden J.M."/>
            <person name="Phatale P."/>
            <person name="Nielsen M.T."/>
            <person name="Lyhne E.K."/>
            <person name="Kogle M.E."/>
            <person name="Strasser K."/>
            <person name="McDonnell E."/>
            <person name="Barry K."/>
            <person name="Clum A."/>
            <person name="Chen C."/>
            <person name="LaButti K."/>
            <person name="Haridas S."/>
            <person name="Nolan M."/>
            <person name="Sandor L."/>
            <person name="Kuo A."/>
            <person name="Lipzen A."/>
            <person name="Hainaut M."/>
            <person name="Drula E."/>
            <person name="Tsang A."/>
            <person name="Magnuson J.K."/>
            <person name="Henrissat B."/>
            <person name="Wiebenga A."/>
            <person name="Simmons B.A."/>
            <person name="Maekelae M.R."/>
            <person name="de Vries R.P."/>
            <person name="Grigoriev I.V."/>
            <person name="Mortensen U.H."/>
            <person name="Baker S.E."/>
            <person name="Andersen M.R."/>
        </authorList>
    </citation>
    <scope>NUCLEOTIDE SEQUENCE [LARGE SCALE GENOMIC DNA]</scope>
    <source>
        <strain>CBS 121057 / IBT 28362</strain>
    </source>
</reference>
<reference key="2">
    <citation type="journal article" date="2009" name="J. Antibiot.">
        <title>Solid-phase synthesis and biological activity of malformin C and its derivatives.</title>
        <authorList>
            <person name="Kojima Y."/>
            <person name="Sunazuka T."/>
            <person name="Nagai K."/>
            <person name="Hirose T."/>
            <person name="Namatame M."/>
            <person name="Ishiyama A."/>
            <person name="Otoguro K."/>
            <person name="Omura S."/>
        </authorList>
    </citation>
    <scope>BIOTECHNOLOGY</scope>
</reference>
<reference key="3">
    <citation type="journal article" date="2015" name="PLoS ONE">
        <title>Study of malformin C, a fungal source cyclic pentapeptide, as an anti-cancer drug.</title>
        <authorList>
            <person name="Wang J."/>
            <person name="Jiang Z."/>
            <person name="Lam W."/>
            <person name="Gullen E.A."/>
            <person name="Yu Z."/>
            <person name="Wei Y."/>
            <person name="Wang L."/>
            <person name="Zeiss C."/>
            <person name="Beck A."/>
            <person name="Cheng E.C."/>
            <person name="Wu C."/>
            <person name="Cheng Y.C."/>
            <person name="Zhang Y."/>
        </authorList>
    </citation>
    <scope>BIOTECHNOLOGY</scope>
</reference>
<reference key="4">
    <citation type="journal article" date="2016" name="Cancer Chemother. Pharmacol.">
        <title>Malformin A1 promotes cell death through induction of apoptosis, necrosis and autophagy in prostate cancer cells.</title>
        <authorList>
            <person name="Liu Y."/>
            <person name="Wang M."/>
            <person name="Wang D."/>
            <person name="Li X."/>
            <person name="Wang W."/>
            <person name="Lou H."/>
            <person name="Yuan H."/>
        </authorList>
    </citation>
    <scope>BIOTECHNOLOGY</scope>
</reference>
<reference key="5">
    <citation type="journal article" date="2017" name="Int. J. Oncol.">
        <title>Malformin A1 treatment alters invasive and oncogenic phenotypes of human colorectal cancer cells through stimulation of the p38 signaling pathway.</title>
        <authorList>
            <person name="Park S.Y."/>
            <person name="Oh H.H."/>
            <person name="Park Y.L."/>
            <person name="Yu H.M."/>
            <person name="Myung D.S."/>
            <person name="Cho S.B."/>
            <person name="Lee W.S."/>
            <person name="Park D."/>
            <person name="Joo Y.E."/>
        </authorList>
    </citation>
    <scope>BIOTECHNOLOGY</scope>
</reference>
<reference key="6">
    <citation type="journal article" date="2018" name="Sci. Rep.">
        <title>Uncovering secondary metabolite evolution and biosynthesis using gene cluster networks and genetic dereplication.</title>
        <authorList>
            <person name="Theobald S."/>
            <person name="Vesth T.C."/>
            <person name="Rendsvig J.K."/>
            <person name="Nielsen K.F."/>
            <person name="Riley R."/>
            <person name="de Abreu L.M."/>
            <person name="Salamov A."/>
            <person name="Frisvad J.C."/>
            <person name="Larsen T.O."/>
            <person name="Andersen M.R."/>
            <person name="Hoof J.B."/>
        </authorList>
    </citation>
    <scope>IDENTIFICATION</scope>
    <scope>FUNCTION</scope>
    <scope>PATHWAY</scope>
</reference>
<evidence type="ECO:0000255" key="1"/>
<evidence type="ECO:0000255" key="2">
    <source>
        <dbReference type="PROSITE-ProRule" id="PRU00258"/>
    </source>
</evidence>
<evidence type="ECO:0000256" key="3">
    <source>
        <dbReference type="SAM" id="MobiDB-lite"/>
    </source>
</evidence>
<evidence type="ECO:0000269" key="4">
    <source>
    </source>
</evidence>
<evidence type="ECO:0000269" key="5">
    <source>
    </source>
</evidence>
<evidence type="ECO:0000269" key="6">
    <source>
    </source>
</evidence>
<evidence type="ECO:0000269" key="7">
    <source>
    </source>
</evidence>
<evidence type="ECO:0000269" key="8">
    <source>
    </source>
</evidence>
<evidence type="ECO:0000303" key="9">
    <source>
    </source>
</evidence>
<evidence type="ECO:0000305" key="10"/>
<evidence type="ECO:0000305" key="11">
    <source>
    </source>
</evidence>
<organism>
    <name type="scientific">Aspergillus sclerotiicarbonarius (strain CBS 121057 / IBT 28362)</name>
    <dbReference type="NCBI Taxonomy" id="1448318"/>
    <lineage>
        <taxon>Eukaryota</taxon>
        <taxon>Fungi</taxon>
        <taxon>Dikarya</taxon>
        <taxon>Ascomycota</taxon>
        <taxon>Pezizomycotina</taxon>
        <taxon>Eurotiomycetes</taxon>
        <taxon>Eurotiomycetidae</taxon>
        <taxon>Eurotiales</taxon>
        <taxon>Aspergillaceae</taxon>
        <taxon>Aspergillus</taxon>
        <taxon>Aspergillus subgen. Circumdati</taxon>
    </lineage>
</organism>
<accession>A0A319DV72</accession>
<comment type="function">
    <text evidence="8 11">Nonribosomal peptide synthetase; part of the gene cluster that mediates the biosynthesis of malformins, cyclic pentapeptides with a disulfide bond between 2 consecutive cysteins, that show potential anti-tumor as well as antimalarial and antitrypanosomal properties (PubMed:30560908). The nonribosomal peptide synthetase mlfA is responsible of the formation of the cyclic pentapeptide (Probable). The malformin biosynthesis clusters in malformin-producing fungi also contain enzymes involved in the formation of the disulfide bond between the two consecutive cysteins within malformins, in addition to additional tailoring enzymes such as methyltransferases or oxidoreductases. They are also composed of up to 4 major facilitator superfamily transporters, and transcription factors probably involved in the regulation of the expression of those clusters (Probable).</text>
</comment>
<comment type="pathway">
    <text evidence="11">Secondary metabolite biosynthesis.</text>
</comment>
<comment type="domain">
    <text evidence="11">NRP synthetases are composed of discrete domains (adenylation (A), thiolation (T) or peptidyl carrier protein (PCP) and condensation (C) domains) which when grouped together are referred to as a single module. Each module is responsible for the recognition (via the A domain) and incorporation of a single amino acid into the growing peptide product. Thus, an NRP synthetase is generally composed of one or more modules and can terminate in a thioesterase domain (TE) that releases the newly synthesized peptide from the enzyme. Occasionally, epimerase (E) domains (responsible for L- to D- amino acid conversion) are present within the NRP synthetase. MlfA has the following architecture: A-T-C-A-T-C-A-T-C-C-A-T-C, with the functions of the five condensation domains during malformin biosynthesis being DL-joining (epimerizing subtype), LL-joining, epimerization, DL-joining and cyclizing domain, respectively.</text>
</comment>
<comment type="biotechnology">
    <text evidence="4 5 6 7">Malformins show anti-tumor properties against human colorectal and prostate cancer cells by the inhibition of proliferation and induction of apoptosis through the activation of the p38 signaling pathway (PubMed:26540166, PubMed:26645406, PubMed:28713983). Malformin C has also been shown to exhibit potent antimalarial and antitrypanosomal properties (PubMed:19876076).</text>
</comment>
<comment type="similarity">
    <text evidence="10">Belongs to the NRP synthetase family.</text>
</comment>
<protein>
    <recommendedName>
        <fullName evidence="9">Malformin synthetase mlfA</fullName>
        <ecNumber evidence="8">6.3.2.-</ecNumber>
    </recommendedName>
    <alternativeName>
        <fullName evidence="9">Malformin biosynthesis cluster protein A</fullName>
    </alternativeName>
    <alternativeName>
        <fullName evidence="9">Nonribosomal peptide synthetase mlfA</fullName>
    </alternativeName>
</protein>
<dbReference type="EC" id="6.3.2.-" evidence="8"/>
<dbReference type="EMBL" id="KZ826410">
    <property type="protein sequence ID" value="PYI01631.1"/>
    <property type="molecule type" value="Genomic_DNA"/>
</dbReference>
<dbReference type="SMR" id="A0A319DV72"/>
<dbReference type="STRING" id="1448318.A0A319DV72"/>
<dbReference type="VEuPathDB" id="FungiDB:BO78DRAFT_455717"/>
<dbReference type="OrthoDB" id="416786at2759"/>
<dbReference type="Proteomes" id="UP000248423">
    <property type="component" value="Unassembled WGS sequence"/>
</dbReference>
<dbReference type="GO" id="GO:0005737">
    <property type="term" value="C:cytoplasm"/>
    <property type="evidence" value="ECO:0007669"/>
    <property type="project" value="TreeGrafter"/>
</dbReference>
<dbReference type="GO" id="GO:0016874">
    <property type="term" value="F:ligase activity"/>
    <property type="evidence" value="ECO:0007669"/>
    <property type="project" value="UniProtKB-KW"/>
</dbReference>
<dbReference type="GO" id="GO:0031177">
    <property type="term" value="F:phosphopantetheine binding"/>
    <property type="evidence" value="ECO:0007669"/>
    <property type="project" value="InterPro"/>
</dbReference>
<dbReference type="GO" id="GO:0043041">
    <property type="term" value="P:amino acid activation for nonribosomal peptide biosynthetic process"/>
    <property type="evidence" value="ECO:0007669"/>
    <property type="project" value="TreeGrafter"/>
</dbReference>
<dbReference type="GO" id="GO:0044550">
    <property type="term" value="P:secondary metabolite biosynthetic process"/>
    <property type="evidence" value="ECO:0007669"/>
    <property type="project" value="TreeGrafter"/>
</dbReference>
<dbReference type="CDD" id="cd05918">
    <property type="entry name" value="A_NRPS_SidN3_like"/>
    <property type="match status" value="4"/>
</dbReference>
<dbReference type="CDD" id="cd19542">
    <property type="entry name" value="CT_NRPS-like"/>
    <property type="match status" value="2"/>
</dbReference>
<dbReference type="CDD" id="cd19534">
    <property type="entry name" value="E_NRPS"/>
    <property type="match status" value="1"/>
</dbReference>
<dbReference type="CDD" id="cd19545">
    <property type="entry name" value="FUM14_C_NRPS-like"/>
    <property type="match status" value="1"/>
</dbReference>
<dbReference type="FunFam" id="3.30.559.10:FF:000016">
    <property type="entry name" value="Nonribosomal peptide synthase Pes1"/>
    <property type="match status" value="1"/>
</dbReference>
<dbReference type="FunFam" id="3.30.559.30:FF:000002">
    <property type="entry name" value="Nonribosomal peptide synthase Pes1"/>
    <property type="match status" value="1"/>
</dbReference>
<dbReference type="FunFam" id="3.30.300.30:FF:000015">
    <property type="entry name" value="Nonribosomal peptide synthase SidD"/>
    <property type="match status" value="4"/>
</dbReference>
<dbReference type="FunFam" id="3.30.559.30:FF:000003">
    <property type="entry name" value="Nonribosomal peptide synthase SidD"/>
    <property type="match status" value="1"/>
</dbReference>
<dbReference type="FunFam" id="3.40.50.12780:FF:000014">
    <property type="entry name" value="Nonribosomal peptide synthetase 1"/>
    <property type="match status" value="2"/>
</dbReference>
<dbReference type="Gene3D" id="3.30.300.30">
    <property type="match status" value="4"/>
</dbReference>
<dbReference type="Gene3D" id="1.10.1200.10">
    <property type="entry name" value="ACP-like"/>
    <property type="match status" value="4"/>
</dbReference>
<dbReference type="Gene3D" id="3.30.559.10">
    <property type="entry name" value="Chloramphenicol acetyltransferase-like domain"/>
    <property type="match status" value="5"/>
</dbReference>
<dbReference type="Gene3D" id="3.40.50.12780">
    <property type="entry name" value="N-terminal domain of ligase-like"/>
    <property type="match status" value="4"/>
</dbReference>
<dbReference type="Gene3D" id="3.30.559.30">
    <property type="entry name" value="Nonribosomal peptide synthetase, condensation domain"/>
    <property type="match status" value="6"/>
</dbReference>
<dbReference type="InterPro" id="IPR010071">
    <property type="entry name" value="AA_adenyl_dom"/>
</dbReference>
<dbReference type="InterPro" id="IPR036736">
    <property type="entry name" value="ACP-like_sf"/>
</dbReference>
<dbReference type="InterPro" id="IPR045851">
    <property type="entry name" value="AMP-bd_C_sf"/>
</dbReference>
<dbReference type="InterPro" id="IPR020845">
    <property type="entry name" value="AMP-binding_CS"/>
</dbReference>
<dbReference type="InterPro" id="IPR000873">
    <property type="entry name" value="AMP-dep_synth/lig_dom"/>
</dbReference>
<dbReference type="InterPro" id="IPR042099">
    <property type="entry name" value="ANL_N_sf"/>
</dbReference>
<dbReference type="InterPro" id="IPR023213">
    <property type="entry name" value="CAT-like_dom_sf"/>
</dbReference>
<dbReference type="InterPro" id="IPR001242">
    <property type="entry name" value="Condensatn"/>
</dbReference>
<dbReference type="InterPro" id="IPR020806">
    <property type="entry name" value="PKS_PP-bd"/>
</dbReference>
<dbReference type="InterPro" id="IPR009081">
    <property type="entry name" value="PP-bd_ACP"/>
</dbReference>
<dbReference type="InterPro" id="IPR006162">
    <property type="entry name" value="Ppantetheine_attach_site"/>
</dbReference>
<dbReference type="NCBIfam" id="TIGR01733">
    <property type="entry name" value="AA-adenyl-dom"/>
    <property type="match status" value="4"/>
</dbReference>
<dbReference type="NCBIfam" id="NF003417">
    <property type="entry name" value="PRK04813.1"/>
    <property type="match status" value="4"/>
</dbReference>
<dbReference type="PANTHER" id="PTHR45527">
    <property type="entry name" value="NONRIBOSOMAL PEPTIDE SYNTHETASE"/>
    <property type="match status" value="1"/>
</dbReference>
<dbReference type="PANTHER" id="PTHR45527:SF12">
    <property type="entry name" value="NONRIBOSOMAL PEPTIDE SYNTHETASE IVOA"/>
    <property type="match status" value="1"/>
</dbReference>
<dbReference type="Pfam" id="PF00501">
    <property type="entry name" value="AMP-binding"/>
    <property type="match status" value="4"/>
</dbReference>
<dbReference type="Pfam" id="PF00668">
    <property type="entry name" value="Condensation"/>
    <property type="match status" value="5"/>
</dbReference>
<dbReference type="Pfam" id="PF00550">
    <property type="entry name" value="PP-binding"/>
    <property type="match status" value="4"/>
</dbReference>
<dbReference type="SMART" id="SM00823">
    <property type="entry name" value="PKS_PP"/>
    <property type="match status" value="3"/>
</dbReference>
<dbReference type="SMART" id="SM01294">
    <property type="entry name" value="PKS_PP_betabranch"/>
    <property type="match status" value="2"/>
</dbReference>
<dbReference type="SUPFAM" id="SSF56801">
    <property type="entry name" value="Acetyl-CoA synthetase-like"/>
    <property type="match status" value="4"/>
</dbReference>
<dbReference type="SUPFAM" id="SSF47336">
    <property type="entry name" value="ACP-like"/>
    <property type="match status" value="4"/>
</dbReference>
<dbReference type="SUPFAM" id="SSF52777">
    <property type="entry name" value="CoA-dependent acyltransferases"/>
    <property type="match status" value="11"/>
</dbReference>
<dbReference type="PROSITE" id="PS00455">
    <property type="entry name" value="AMP_BINDING"/>
    <property type="match status" value="3"/>
</dbReference>
<dbReference type="PROSITE" id="PS50075">
    <property type="entry name" value="CARRIER"/>
    <property type="match status" value="4"/>
</dbReference>
<dbReference type="PROSITE" id="PS00012">
    <property type="entry name" value="PHOSPHOPANTETHEINE"/>
    <property type="match status" value="1"/>
</dbReference>
<sequence>MGRFSCIFPSLTDGYIPDPAHCRAAGRRVYEIDLGGWGPLPDRPDAHLVAAWALILSSYVGTDEVAFYVVPARGPDATALCELKVNGSLPRRSLTDDAWQLLHPLPLGPGQVSSETANTIITFAEDIDPLFITQAEEAFLTLHVRNTSPGNVALHLGYHLSLFTDAQAANVGTAMAQVLTSLAGDPDELVRDVDHMSRTHLDQIWHFNANVPSTWQECFHDVVQRHAADRPHSLAIDAWDGRLTYAELVGKATPLARHMQERGVRPGVVVPISFERSAGALIAMLAVSKAGGAFVSVPTSLPPGRLDAILEVIEAPFVLTRSTHQSFWAGRLPALIIDNYPKPASTAVVETLAKADDLFYVIFTSGSTGRPKGCMLSHSNWLNGALRNAPNWKYGPNSRVLQMLNHTFDMSLLEICTSLGSGACVCIPPADEVEAGLAGAINRWQVNHVIMTPSLARALRPGDVPGLRTMCLGGEAFPREIVTMWSECIHLFQFYGPSECSINSSTRAITGVDADPLNIGPPNSAACWVSDIQDHNKLVPIGAIGELLVSGPIVGMGYLRNPVKTAEAFIDHVGFIPMDDPKFAGFRLYKTGDLVRWNSDGTLTFCGRADTQVKLNGQRLELAEVEYQLGLEADVQLAIALVPQVGRCKNNLIAILTVRGAATSSRGVTAGEIPLLNRQDPIVQQAVKRLRAQLQQALPRYMVPTIWAFVGHMPMSASGKIDRVRVRGWVEEMSQETFDAITGRSFEADDHLLGLTHLENEIQLAWAEALGLSAAEVGLHQPFVALGGDSIKALDAVGRCRARQVDITMVSTLSCEGVREAASLAKVRDSPTQRVVEMAVDYSDLWDCLSSDYDLAKLGIGNADEVEDVFPCTSMQEGMFLGQIRRPGAYHMRFFHRVQLKGGGLPTVERIQTAWSSLVARHPSLRTIFVDDLSPEAIYHSVVLRNVPVDTTTREVPRDLSPEDALSMFTQELVPFRPNAPLHRLRLFTCRGRVSYFMLEISHVIMDGYALSVFRREFIQACSTPASVPRGPDYRMFANYHRTRQTADSAAYWTAYLKDAAPCHIPTYDQAMAADGLDYPRTLLRRDFSYQTSGTFLQRCKERQVTLACAIRATWALVLRAYTQSQDVCFGYVSSGRNVPVPDVETIFGLCLSMQVCRARVGESRTLVDLARRIQEDYVESLPYQHYPLAEVQRGLKQTRRQALFNTAISMEWVPPAGDDEDALIDLEEIREQDDPTEYDIAISVDVHAGCIKLGFLYWPTLTEFEITHLAQAMQGAMDCFALQPDGPVDSLTLLKPGDLSSALVGWPDLLPLEAVRGNVMSMIDRWVNRQPDTLAIDGWDESLTYHQLQQQSSWVARNLLHRGVHQGDRILVCMDRSSRTVVTILGIVRSGAVLVLSNPADPAKRLQWLTQKCNAAMIVADPQYRDRFEAPGNPSVTVVDAPSVCTPAAWDYLFPVLDGQDPVSILFTSGSTGTPKGIVMHHGSLATSVLLGHGRTLRFSRQTRMLHFASLTFDAALAEIFTTLAHGGCMCIPSEDDRLSDVPGCIARFKVNTAMLTPSVGRILDPAALPTLRTLVLVGEPMSRLDVERFAPALDLYNGAGPTETSIMVTIAGPMQPTDDPLNLGHAVAGVRLWVTETEAPNRLAPLGAVGELVVEGSLVTQGYLDDPVRTQEAFLSKLAWLPSHNPLYRTGDLVRYVADGSFRYMGRKDTQVKLRGQRIELQEVEYHLRCSWPHAQVVVEMVIPDGRTRSQAALVAFVSGLTPEDAHFLFNGALISAEAPGIAQAVLSEKTTQALSEALPRHMVPSIYLALETIPLSVNGKADRRRLRDLGASWLASSAFHPGPECLQTPTAEWARAPELERTLVELWATTLSIEPGAIRGDDSFFELGGDSVSAMKLVATARDKYKLSLSVPQVFRYPTIRQIATQCEGIAVQLASSASSTTEEGFTFSTPDESSTNEGLDGEFWQLASAQLADLAREKGKTLDVAAILKRMQQESSSSPAPSVSSSSSSSSAPKPLLAQPEPPTNLRDSVPEPFSLIGGGPSAVEQICQQAMEQCQIPRESIEDIYPATPLQEGMMALMAKTPGVYTTTLRCELSNQVDCARLQSAWDQASEAHPILRTRIVLTNDHRAMQVVQHGNRLPWDVYSLRDSDNLPDLTSQMTLGSPLLRLAEIRQAGGQGRLLLVTIHHALYDGWSFPLVKQAVEDAYSGQALKSQAFTPFIAYLNEGRLAAEQFWADHLESFAGGAFPCLPTVDHRIRPTARLTRKLSLPVSAGHQYTLATKIQAAWAVTVSRYDDETDVVFGTVSTGRAAPVPGIDRVAGPTITTIPVRVSLQDRAQRVGPFLQKVQEDGWRSLDHEHLGLQHIRRLGDSAAAACRLQTLLVLQPRQQPPAEPSSAILAGLQDMAELEGLDTYPLMLVCEPDGADVHLIAIFDPVVLHEAILARMVTHWEHVLTQLWTEPDIAVVDLEALSPGDKKVLMRWNGASQLPDGCVHESVHQWRLSTPHAPAVCAWDGDWTYEELDNLSSALAHHLTLHGVSHGTSVALYHEKSRWAAVGLLAVFKAGGILVTLDPAHPVDRLREILGQVQARVILSSQEHEATAKALGTLVLTVEEVATQPEPELFRPVGPITSSQCAFTPFTSGSTGRPKGIPLEHRGMVATIASMAERCLLTTTSRVLQFASFAFDASVMEHLLAWYAGGCLCVPSEFDRQANLGEVIRDLRVNWAFLTPSCLRLITPDDVPCLEGMGLGGEPVLPEHITTWAPRLRQLVQMYGPAECSFVTVLTEVTQASENRLIGSPSACRCWVIDPMDPDRLMPLGAIGELVIEGLAVGRGYINEPQRTAEAFIAPPPWLQTLYPDDGQPRRLYRTGDLVRYAGDDGRLTFVGRKDGQLKLHGQRIELGDVETHLRPLIPATQGIAVEMIVCADDQNPLLAAFIEVSQDATALQRNTHLVHPGRVQSAVDIKAIESTLARTVPHYMVPSIYLHISKLPLNPSGKLNRRQLREMVGALPRQSLNEYAIKCHSSTTNRPATAQERGLQTIWATVLALDRDAIGVHDDFFRMGGDSIAGMQVATKCNAAGMRISSADLFRHRTIARLVLHLQNTSQESSAMITLPEEKFDEWVHLAPIQQLFFENAPDGPNHFNQSLLLRTGRQVDAQELAAGLDILVQRHSMLRARFRRTDSGRWTQQVMSLGPSPSSFYRLFTHGKASPETLPGIFTASQSAIDIQKGPLLSVDLVDLTDGSQLVYFVAHHLVIDLVSWRILHAELEDYLRTGSLAAMAESTPFLTWCRAQAEYSAKELSPAQSLPGYQSAANHFDPEGYWGISMESNTFTQVASYRFTLDGDTTETLFGVANDALGTQPVEIMLAALWYSFTQTLTGRPEPSIYVEGHGREPWTDTIDLSGTVGWFTTMSPLVSSPWSNLSQASMRDFADALRYIKDQRRRVPANGWAYFASRYLNDEGRVVYGRTNPAVEILFNYMGQYQQLTREDAILQLVGDDIQAGTGAADIAGDVRRFALIDVSAFTAHGCLSFDFSFPESIQHRDRLQHWFEQCRQTLIVAASILSLQTPQKTLTDFPLLPSLTYDQLSQCLDHTLPAVGLFPSDIVDIYPCSPVQRGMLLAQLRNPQFYQQRFRFRVLPDTRTEAIGLVGLQQVRDAWIEVINRHDILRTIFLPVSDQGYVDQVLLKPGSLHHLVRIGAGEPDTAIDPGTPHWVNISHDPTGTVVCDWNVSHALVDAVSVAIIQREVSQALQGHLSTPPPQQYGNYIQWLSAQNMQETQDYWKKYLQAVEPCLFPRLAAHSDRLTSPVGIQATRATVDREVRIDQLCHQHGITLTNVFHLVWALVLRTYVGTNNVCFGYATQGRDVPVAGVEEMVGPVVNVLATTLRLQDSESVLDALQTHQTHLADNLAHQNHALVDIYATHGVAGSQLFNTIVSLQDLSHHETADTQSLRLEVMPAHDSSEYDIALNVGVNKTSIELVCSYQTWSLSAEHADALLRTAARVLDEILQTPLKTIGEVDVVSLTCKQQAMRWNATLPATVHEYVHEQIQAQCRLYANREAVCAWDGHFTFAEIDDLSSRLAGNLISLGAQPGRIVPIYSPKSRWVVIAILGVLKAGAAFTLLDASHPVARLQEICQGVNADLIISLASHASVAAQLAAAIVILDNAPSMSSDEIIMCTRRQSLSTESLAYVIFTSGSTGKPKGVMVSHSNLCTSAMAQTVALNLTTESRVLQFASYAFDACILEVIGALFAGACVCIPSETDSKDDLVGSIERMRVTWALLTPSVARILNQETLPTLETLVLGGEPITLSDLEPWRSRLQLVCAYGPSECTIVSTTTALSTFPNRSKNIGQRGACATWVVDPQDYQKLVPFGATGELLIEGPIVGQGYLGDAVRTAECFPPPPRWLSQLRQAPTRVYRTGDLVRYESDGTIRFVGRKDSQIKFHGQRIELGDIEHHAQDAFRDAQTVIIDLITPGELHKAYLAAFVLQKDTDAHLDKVDDDCILLSPSDRFRSRSLAAQEQMHEELPHYMVPAIFLPLSRVPLAKTGKTDRQYLRQCALALQGHDLEAYRAASSTKRPPSTGMQQGIQALVATVLGKDTTEVGMDDSFFHLGGDSVQAMRLVSVGRQQGLAVSVLSIFDHPRLADLAEHISSRVKDRNSVRLPSSSLLPSISEAGQLDRLVEGHPFEKDDVVDILPTTGFQRYWLDMQLSSYVIIDIPGQVDWAQLTKALQRVIENCPILRTAFVPYRGSTVQVILKTIVSLIEVDLTGDLTSAVEEWCRQDAKTPVSPGTSYMHTVRASQGATQHKLIMRLSHAQYDAVALSLVLNHLSCTYADQLPLPDAPAFSDYLTYQRTRNKERASSDFWGQLLKGASITNLGPQGSRDDKEATIARSRHISVGPLPRGITMATVVKAAWSLILARRTGMCDVLFGQVVHGRNTSFPGIERVVGPCTNITPVRASIAPQWTGLDLLQALQDQHRESMAWETVDLDDVLSYCANWTPGSALQTVVQHQNVVLEDLGLRLGDVPSTVSVRAFDHAPREVWLYSSTDDSHPDRLSLRIFSSSWTLDDTIAEELLGLVAEEIVELLRNPEQVLCV</sequence>